<evidence type="ECO:0000255" key="1">
    <source>
        <dbReference type="HAMAP-Rule" id="MF_00181"/>
    </source>
</evidence>
<evidence type="ECO:0000256" key="2">
    <source>
        <dbReference type="SAM" id="MobiDB-lite"/>
    </source>
</evidence>
<organism>
    <name type="scientific">Polaromonas naphthalenivorans (strain CJ2)</name>
    <dbReference type="NCBI Taxonomy" id="365044"/>
    <lineage>
        <taxon>Bacteria</taxon>
        <taxon>Pseudomonadati</taxon>
        <taxon>Pseudomonadota</taxon>
        <taxon>Betaproteobacteria</taxon>
        <taxon>Burkholderiales</taxon>
        <taxon>Comamonadaceae</taxon>
        <taxon>Polaromonas</taxon>
    </lineage>
</organism>
<sequence length="510" mass="52653">MDFELKTLTRTLICNEKADALIVLIPEGLTAGDDALSVLAALAIKSGDLEVKPGKLLNAYRVTGIAATRVLLVGAGDASPKSVRTAVNAAMGALKAGNNVQRAVLCLNALPTLQPEAVRAAIVACSETAYAYTTTKSKPAAAKLQQMVVAVDGLANAQAGFDKAVGLAKGIELAKEWANRPANHATPTLLAGAAKELGKLPRIKTEVLGPKEIEKLGMGAFLAVAQGTAEPLRFIVLRYEGAAKAEAPVVLIGKGITFDTGGISIKPAAEMDEMKFDMCGAASVLGTFRALAELQPGLNVVGLIPACENMPGDRAIKPGDVVTSMSGQTIEILNTDAEGRLVLCDALTYAARLKPRAVVDIATLTGACVVALGGVRSGLFSNNEALAESLARAGESSLDPCWRMPLDDDYAEGLKSNFADVANVAGRAGGAVTAAKFLQRFAADFAWAHLDIAGTAWKSGAAKGATGRPVALLLDFLLGQVQAVPAAQPVKASPKTRPARKSTPAAKTRA</sequence>
<reference key="1">
    <citation type="journal article" date="2009" name="Environ. Microbiol.">
        <title>The genome of Polaromonas naphthalenivorans strain CJ2, isolated from coal tar-contaminated sediment, reveals physiological and metabolic versatility and evolution through extensive horizontal gene transfer.</title>
        <authorList>
            <person name="Yagi J.M."/>
            <person name="Sims D."/>
            <person name="Brettin T."/>
            <person name="Bruce D."/>
            <person name="Madsen E.L."/>
        </authorList>
    </citation>
    <scope>NUCLEOTIDE SEQUENCE [LARGE SCALE GENOMIC DNA]</scope>
    <source>
        <strain>CJ2</strain>
    </source>
</reference>
<protein>
    <recommendedName>
        <fullName evidence="1">Probable cytosol aminopeptidase</fullName>
        <ecNumber evidence="1">3.4.11.1</ecNumber>
    </recommendedName>
    <alternativeName>
        <fullName evidence="1">Leucine aminopeptidase</fullName>
        <shortName evidence="1">LAP</shortName>
        <ecNumber evidence="1">3.4.11.10</ecNumber>
    </alternativeName>
    <alternativeName>
        <fullName evidence="1">Leucyl aminopeptidase</fullName>
    </alternativeName>
</protein>
<name>AMPA_POLNA</name>
<comment type="function">
    <text evidence="1">Presumably involved in the processing and regular turnover of intracellular proteins. Catalyzes the removal of unsubstituted N-terminal amino acids from various peptides.</text>
</comment>
<comment type="catalytic activity">
    <reaction evidence="1">
        <text>Release of an N-terminal amino acid, Xaa-|-Yaa-, in which Xaa is preferably Leu, but may be other amino acids including Pro although not Arg or Lys, and Yaa may be Pro. Amino acid amides and methyl esters are also readily hydrolyzed, but rates on arylamides are exceedingly low.</text>
        <dbReference type="EC" id="3.4.11.1"/>
    </reaction>
</comment>
<comment type="catalytic activity">
    <reaction evidence="1">
        <text>Release of an N-terminal amino acid, preferentially leucine, but not glutamic or aspartic acids.</text>
        <dbReference type="EC" id="3.4.11.10"/>
    </reaction>
</comment>
<comment type="cofactor">
    <cofactor evidence="1">
        <name>Mn(2+)</name>
        <dbReference type="ChEBI" id="CHEBI:29035"/>
    </cofactor>
    <text evidence="1">Binds 2 manganese ions per subunit.</text>
</comment>
<comment type="subcellular location">
    <subcellularLocation>
        <location evidence="1">Cytoplasm</location>
    </subcellularLocation>
</comment>
<comment type="similarity">
    <text evidence="1">Belongs to the peptidase M17 family.</text>
</comment>
<gene>
    <name evidence="1" type="primary">pepA</name>
    <name type="ordered locus">Pnap_2169</name>
</gene>
<accession>A1VP99</accession>
<proteinExistence type="inferred from homology"/>
<dbReference type="EC" id="3.4.11.1" evidence="1"/>
<dbReference type="EC" id="3.4.11.10" evidence="1"/>
<dbReference type="EMBL" id="CP000529">
    <property type="protein sequence ID" value="ABM37477.1"/>
    <property type="molecule type" value="Genomic_DNA"/>
</dbReference>
<dbReference type="RefSeq" id="WP_011801555.1">
    <property type="nucleotide sequence ID" value="NC_008781.1"/>
</dbReference>
<dbReference type="SMR" id="A1VP99"/>
<dbReference type="STRING" id="365044.Pnap_2169"/>
<dbReference type="MEROPS" id="M17.003"/>
<dbReference type="KEGG" id="pna:Pnap_2169"/>
<dbReference type="eggNOG" id="COG0260">
    <property type="taxonomic scope" value="Bacteria"/>
</dbReference>
<dbReference type="HOGENOM" id="CLU_013734_2_2_4"/>
<dbReference type="OrthoDB" id="9809354at2"/>
<dbReference type="Proteomes" id="UP000000644">
    <property type="component" value="Chromosome"/>
</dbReference>
<dbReference type="GO" id="GO:0005737">
    <property type="term" value="C:cytoplasm"/>
    <property type="evidence" value="ECO:0007669"/>
    <property type="project" value="UniProtKB-SubCell"/>
</dbReference>
<dbReference type="GO" id="GO:0030145">
    <property type="term" value="F:manganese ion binding"/>
    <property type="evidence" value="ECO:0007669"/>
    <property type="project" value="UniProtKB-UniRule"/>
</dbReference>
<dbReference type="GO" id="GO:0070006">
    <property type="term" value="F:metalloaminopeptidase activity"/>
    <property type="evidence" value="ECO:0007669"/>
    <property type="project" value="InterPro"/>
</dbReference>
<dbReference type="GO" id="GO:0006508">
    <property type="term" value="P:proteolysis"/>
    <property type="evidence" value="ECO:0007669"/>
    <property type="project" value="UniProtKB-KW"/>
</dbReference>
<dbReference type="CDD" id="cd00433">
    <property type="entry name" value="Peptidase_M17"/>
    <property type="match status" value="1"/>
</dbReference>
<dbReference type="Gene3D" id="3.40.220.10">
    <property type="entry name" value="Leucine Aminopeptidase, subunit E, domain 1"/>
    <property type="match status" value="1"/>
</dbReference>
<dbReference type="Gene3D" id="3.40.630.10">
    <property type="entry name" value="Zn peptidases"/>
    <property type="match status" value="1"/>
</dbReference>
<dbReference type="HAMAP" id="MF_00181">
    <property type="entry name" value="Cytosol_peptidase_M17"/>
    <property type="match status" value="1"/>
</dbReference>
<dbReference type="InterPro" id="IPR011356">
    <property type="entry name" value="Leucine_aapep/pepB"/>
</dbReference>
<dbReference type="InterPro" id="IPR043472">
    <property type="entry name" value="Macro_dom-like"/>
</dbReference>
<dbReference type="InterPro" id="IPR000819">
    <property type="entry name" value="Peptidase_M17_C"/>
</dbReference>
<dbReference type="InterPro" id="IPR023042">
    <property type="entry name" value="Peptidase_M17_leu_NH2_pept"/>
</dbReference>
<dbReference type="InterPro" id="IPR008283">
    <property type="entry name" value="Peptidase_M17_N"/>
</dbReference>
<dbReference type="NCBIfam" id="NF002074">
    <property type="entry name" value="PRK00913.1-4"/>
    <property type="match status" value="1"/>
</dbReference>
<dbReference type="PANTHER" id="PTHR11963:SF23">
    <property type="entry name" value="CYTOSOL AMINOPEPTIDASE"/>
    <property type="match status" value="1"/>
</dbReference>
<dbReference type="PANTHER" id="PTHR11963">
    <property type="entry name" value="LEUCINE AMINOPEPTIDASE-RELATED"/>
    <property type="match status" value="1"/>
</dbReference>
<dbReference type="Pfam" id="PF00883">
    <property type="entry name" value="Peptidase_M17"/>
    <property type="match status" value="1"/>
</dbReference>
<dbReference type="Pfam" id="PF02789">
    <property type="entry name" value="Peptidase_M17_N"/>
    <property type="match status" value="1"/>
</dbReference>
<dbReference type="PRINTS" id="PR00481">
    <property type="entry name" value="LAMNOPPTDASE"/>
</dbReference>
<dbReference type="SUPFAM" id="SSF52949">
    <property type="entry name" value="Macro domain-like"/>
    <property type="match status" value="1"/>
</dbReference>
<dbReference type="SUPFAM" id="SSF53187">
    <property type="entry name" value="Zn-dependent exopeptidases"/>
    <property type="match status" value="1"/>
</dbReference>
<dbReference type="PROSITE" id="PS00631">
    <property type="entry name" value="CYTOSOL_AP"/>
    <property type="match status" value="1"/>
</dbReference>
<feature type="chain" id="PRO_1000118460" description="Probable cytosol aminopeptidase">
    <location>
        <begin position="1"/>
        <end position="510"/>
    </location>
</feature>
<feature type="region of interest" description="Disordered" evidence="2">
    <location>
        <begin position="487"/>
        <end position="510"/>
    </location>
</feature>
<feature type="active site" evidence="1">
    <location>
        <position position="266"/>
    </location>
</feature>
<feature type="active site" evidence="1">
    <location>
        <position position="340"/>
    </location>
</feature>
<feature type="binding site" evidence="1">
    <location>
        <position position="254"/>
    </location>
    <ligand>
        <name>Mn(2+)</name>
        <dbReference type="ChEBI" id="CHEBI:29035"/>
        <label>2</label>
    </ligand>
</feature>
<feature type="binding site" evidence="1">
    <location>
        <position position="259"/>
    </location>
    <ligand>
        <name>Mn(2+)</name>
        <dbReference type="ChEBI" id="CHEBI:29035"/>
        <label>1</label>
    </ligand>
</feature>
<feature type="binding site" evidence="1">
    <location>
        <position position="259"/>
    </location>
    <ligand>
        <name>Mn(2+)</name>
        <dbReference type="ChEBI" id="CHEBI:29035"/>
        <label>2</label>
    </ligand>
</feature>
<feature type="binding site" evidence="1">
    <location>
        <position position="277"/>
    </location>
    <ligand>
        <name>Mn(2+)</name>
        <dbReference type="ChEBI" id="CHEBI:29035"/>
        <label>2</label>
    </ligand>
</feature>
<feature type="binding site" evidence="1">
    <location>
        <position position="336"/>
    </location>
    <ligand>
        <name>Mn(2+)</name>
        <dbReference type="ChEBI" id="CHEBI:29035"/>
        <label>1</label>
    </ligand>
</feature>
<feature type="binding site" evidence="1">
    <location>
        <position position="338"/>
    </location>
    <ligand>
        <name>Mn(2+)</name>
        <dbReference type="ChEBI" id="CHEBI:29035"/>
        <label>1</label>
    </ligand>
</feature>
<feature type="binding site" evidence="1">
    <location>
        <position position="338"/>
    </location>
    <ligand>
        <name>Mn(2+)</name>
        <dbReference type="ChEBI" id="CHEBI:29035"/>
        <label>2</label>
    </ligand>
</feature>
<keyword id="KW-0031">Aminopeptidase</keyword>
<keyword id="KW-0963">Cytoplasm</keyword>
<keyword id="KW-0378">Hydrolase</keyword>
<keyword id="KW-0464">Manganese</keyword>
<keyword id="KW-0479">Metal-binding</keyword>
<keyword id="KW-0645">Protease</keyword>
<keyword id="KW-1185">Reference proteome</keyword>